<evidence type="ECO:0000255" key="1">
    <source>
        <dbReference type="HAMAP-Rule" id="MF_00385"/>
    </source>
</evidence>
<evidence type="ECO:0000305" key="2"/>
<name>RS16_CLONN</name>
<sequence length="85" mass="9734">MAVKIRLRRMGAKKAPFYRVVVADSRSPRDGRFVEEIGYYNPISEPKAIKIDEEKAIKWVKNGAQPTDVVKRLFKEAGIDEKLSK</sequence>
<organism>
    <name type="scientific">Clostridium novyi (strain NT)</name>
    <dbReference type="NCBI Taxonomy" id="386415"/>
    <lineage>
        <taxon>Bacteria</taxon>
        <taxon>Bacillati</taxon>
        <taxon>Bacillota</taxon>
        <taxon>Clostridia</taxon>
        <taxon>Eubacteriales</taxon>
        <taxon>Clostridiaceae</taxon>
        <taxon>Clostridium</taxon>
    </lineage>
</organism>
<reference key="1">
    <citation type="journal article" date="2006" name="Nat. Biotechnol.">
        <title>The genome and transcriptomes of the anti-tumor agent Clostridium novyi-NT.</title>
        <authorList>
            <person name="Bettegowda C."/>
            <person name="Huang X."/>
            <person name="Lin J."/>
            <person name="Cheong I."/>
            <person name="Kohli M."/>
            <person name="Szabo S.A."/>
            <person name="Zhang X."/>
            <person name="Diaz L.A. Jr."/>
            <person name="Velculescu V.E."/>
            <person name="Parmigiani G."/>
            <person name="Kinzler K.W."/>
            <person name="Vogelstein B."/>
            <person name="Zhou S."/>
        </authorList>
    </citation>
    <scope>NUCLEOTIDE SEQUENCE [LARGE SCALE GENOMIC DNA]</scope>
    <source>
        <strain>NT</strain>
    </source>
</reference>
<feature type="chain" id="PRO_1000049244" description="Small ribosomal subunit protein bS16">
    <location>
        <begin position="1"/>
        <end position="85"/>
    </location>
</feature>
<comment type="similarity">
    <text evidence="1">Belongs to the bacterial ribosomal protein bS16 family.</text>
</comment>
<dbReference type="EMBL" id="CP000382">
    <property type="protein sequence ID" value="ABK60668.1"/>
    <property type="molecule type" value="Genomic_DNA"/>
</dbReference>
<dbReference type="RefSeq" id="WP_011722284.1">
    <property type="nucleotide sequence ID" value="NC_008593.1"/>
</dbReference>
<dbReference type="SMR" id="A0Q0Y3"/>
<dbReference type="STRING" id="386415.NT01CX_2212"/>
<dbReference type="DNASU" id="4540311"/>
<dbReference type="KEGG" id="cno:NT01CX_2212"/>
<dbReference type="eggNOG" id="COG0228">
    <property type="taxonomic scope" value="Bacteria"/>
</dbReference>
<dbReference type="HOGENOM" id="CLU_100590_5_0_9"/>
<dbReference type="Proteomes" id="UP000008220">
    <property type="component" value="Chromosome"/>
</dbReference>
<dbReference type="GO" id="GO:0005737">
    <property type="term" value="C:cytoplasm"/>
    <property type="evidence" value="ECO:0007669"/>
    <property type="project" value="UniProtKB-ARBA"/>
</dbReference>
<dbReference type="GO" id="GO:0015935">
    <property type="term" value="C:small ribosomal subunit"/>
    <property type="evidence" value="ECO:0007669"/>
    <property type="project" value="TreeGrafter"/>
</dbReference>
<dbReference type="GO" id="GO:0003735">
    <property type="term" value="F:structural constituent of ribosome"/>
    <property type="evidence" value="ECO:0007669"/>
    <property type="project" value="InterPro"/>
</dbReference>
<dbReference type="GO" id="GO:0006412">
    <property type="term" value="P:translation"/>
    <property type="evidence" value="ECO:0007669"/>
    <property type="project" value="UniProtKB-UniRule"/>
</dbReference>
<dbReference type="FunFam" id="3.30.1320.10:FF:000002">
    <property type="entry name" value="30S ribosomal protein S16"/>
    <property type="match status" value="1"/>
</dbReference>
<dbReference type="Gene3D" id="3.30.1320.10">
    <property type="match status" value="1"/>
</dbReference>
<dbReference type="HAMAP" id="MF_00385">
    <property type="entry name" value="Ribosomal_bS16"/>
    <property type="match status" value="1"/>
</dbReference>
<dbReference type="InterPro" id="IPR000307">
    <property type="entry name" value="Ribosomal_bS16"/>
</dbReference>
<dbReference type="InterPro" id="IPR023803">
    <property type="entry name" value="Ribosomal_bS16_dom_sf"/>
</dbReference>
<dbReference type="NCBIfam" id="TIGR00002">
    <property type="entry name" value="S16"/>
    <property type="match status" value="1"/>
</dbReference>
<dbReference type="PANTHER" id="PTHR12919">
    <property type="entry name" value="30S RIBOSOMAL PROTEIN S16"/>
    <property type="match status" value="1"/>
</dbReference>
<dbReference type="PANTHER" id="PTHR12919:SF20">
    <property type="entry name" value="SMALL RIBOSOMAL SUBUNIT PROTEIN BS16M"/>
    <property type="match status" value="1"/>
</dbReference>
<dbReference type="Pfam" id="PF00886">
    <property type="entry name" value="Ribosomal_S16"/>
    <property type="match status" value="1"/>
</dbReference>
<dbReference type="SUPFAM" id="SSF54565">
    <property type="entry name" value="Ribosomal protein S16"/>
    <property type="match status" value="1"/>
</dbReference>
<gene>
    <name evidence="1" type="primary">rpsP</name>
    <name type="ordered locus">NT01CX_2212</name>
</gene>
<keyword id="KW-1185">Reference proteome</keyword>
<keyword id="KW-0687">Ribonucleoprotein</keyword>
<keyword id="KW-0689">Ribosomal protein</keyword>
<accession>A0Q0Y3</accession>
<protein>
    <recommendedName>
        <fullName evidence="1">Small ribosomal subunit protein bS16</fullName>
    </recommendedName>
    <alternativeName>
        <fullName evidence="2">30S ribosomal protein S16</fullName>
    </alternativeName>
</protein>
<proteinExistence type="inferred from homology"/>